<sequence>MTSNTTEIPYHFLPYVRIQYDWQLAYKQDSDNCWVAYQKDLKNTIHGSVHSTKIDENNFKFESDYGFKLTPNKENKNNIRVENDKYSIEIYAPEKQLKVSGGKKRITSMGVSHLGELGVYGSTDGTLEVFETGDGQIRRKLDGHVGDVDLAMFFPSGRVILSGSSDSRLKIWDAIEGTCASTLVGHIGGITSASLVDRGRNLVSCSRDGTSKLWDIPTSSIISNLTKLSRPINDSFIASSLLDSIPTTTTTNSNDNNKVDEREVGTDGKTLIIAAEEGFLQAIDLRSKNMISQMNVVQSGEKSTRSVAFNACHVHKNYIIGGDHNGSIYFWDKRNLNSPFCRLQFTNSPIHHIKANSSNSKIANSIWVTSGDGCCFLLDLDKNQIITSLSGIDTDVVTSFNIVGNQAYLTSRDSIIRCYNNLLNI</sequence>
<keyword id="KW-0647">Proteasome</keyword>
<keyword id="KW-1185">Reference proteome</keyword>
<keyword id="KW-0677">Repeat</keyword>
<keyword id="KW-0853">WD repeat</keyword>
<accession>Q8MYE8</accession>
<accession>Q54ZH6</accession>
<evidence type="ECO:0000250" key="1"/>
<evidence type="ECO:0000305" key="2"/>
<feature type="chain" id="PRO_0000328749" description="Probable proteasomal ATPase-associated factor 1">
    <location>
        <begin position="1"/>
        <end position="425"/>
    </location>
</feature>
<feature type="repeat" description="WD 1">
    <location>
        <begin position="101"/>
        <end position="140"/>
    </location>
</feature>
<feature type="repeat" description="WD 2">
    <location>
        <begin position="143"/>
        <end position="182"/>
    </location>
</feature>
<feature type="repeat" description="WD 3">
    <location>
        <begin position="185"/>
        <end position="224"/>
    </location>
</feature>
<feature type="repeat" description="WD 4">
    <location>
        <begin position="299"/>
        <end position="341"/>
    </location>
</feature>
<feature type="repeat" description="WD 5">
    <location>
        <begin position="345"/>
        <end position="382"/>
    </location>
</feature>
<dbReference type="EMBL" id="AAFI02000020">
    <property type="protein sequence ID" value="EAL68698.1"/>
    <property type="molecule type" value="Genomic_DNA"/>
</dbReference>
<dbReference type="RefSeq" id="XP_642666.1">
    <property type="nucleotide sequence ID" value="XM_637574.1"/>
</dbReference>
<dbReference type="SMR" id="Q8MYE8"/>
<dbReference type="STRING" id="44689.Q8MYE8"/>
<dbReference type="PaxDb" id="44689-DDB0169267"/>
<dbReference type="EnsemblProtists" id="EAL68698">
    <property type="protein sequence ID" value="EAL68698"/>
    <property type="gene ID" value="DDB_G0277471"/>
</dbReference>
<dbReference type="GeneID" id="8621083"/>
<dbReference type="KEGG" id="ddi:DDB_G0277471"/>
<dbReference type="dictyBase" id="DDB_G0277471"/>
<dbReference type="VEuPathDB" id="AmoebaDB:DDB_G0277471"/>
<dbReference type="eggNOG" id="KOG0266">
    <property type="taxonomic scope" value="Eukaryota"/>
</dbReference>
<dbReference type="HOGENOM" id="CLU_037051_3_0_1"/>
<dbReference type="InParanoid" id="Q8MYE8"/>
<dbReference type="OMA" id="CNWNEAL"/>
<dbReference type="PhylomeDB" id="Q8MYE8"/>
<dbReference type="PRO" id="PR:Q8MYE8"/>
<dbReference type="Proteomes" id="UP000002195">
    <property type="component" value="Chromosome 2"/>
</dbReference>
<dbReference type="GO" id="GO:0000502">
    <property type="term" value="C:proteasome complex"/>
    <property type="evidence" value="ECO:0007669"/>
    <property type="project" value="UniProtKB-KW"/>
</dbReference>
<dbReference type="Gene3D" id="2.130.10.10">
    <property type="entry name" value="YVTN repeat-like/Quinoprotein amine dehydrogenase"/>
    <property type="match status" value="2"/>
</dbReference>
<dbReference type="InterPro" id="IPR020472">
    <property type="entry name" value="G-protein_beta_WD-40_rep"/>
</dbReference>
<dbReference type="InterPro" id="IPR015943">
    <property type="entry name" value="WD40/YVTN_repeat-like_dom_sf"/>
</dbReference>
<dbReference type="InterPro" id="IPR019775">
    <property type="entry name" value="WD40_repeat_CS"/>
</dbReference>
<dbReference type="InterPro" id="IPR036322">
    <property type="entry name" value="WD40_repeat_dom_sf"/>
</dbReference>
<dbReference type="InterPro" id="IPR001680">
    <property type="entry name" value="WD40_rpt"/>
</dbReference>
<dbReference type="InterPro" id="IPR051179">
    <property type="entry name" value="WD_repeat_multifunction"/>
</dbReference>
<dbReference type="PANTHER" id="PTHR19857:SF19">
    <property type="entry name" value="26S PROTEASOME REGULATORY SUBUNIT RPN14"/>
    <property type="match status" value="1"/>
</dbReference>
<dbReference type="PANTHER" id="PTHR19857">
    <property type="entry name" value="MITOCHONDRIAL DIVISION PROTEIN 1-RELATED"/>
    <property type="match status" value="1"/>
</dbReference>
<dbReference type="Pfam" id="PF00400">
    <property type="entry name" value="WD40"/>
    <property type="match status" value="2"/>
</dbReference>
<dbReference type="PRINTS" id="PR00320">
    <property type="entry name" value="GPROTEINBRPT"/>
</dbReference>
<dbReference type="SMART" id="SM00320">
    <property type="entry name" value="WD40"/>
    <property type="match status" value="5"/>
</dbReference>
<dbReference type="SUPFAM" id="SSF50978">
    <property type="entry name" value="WD40 repeat-like"/>
    <property type="match status" value="1"/>
</dbReference>
<dbReference type="PROSITE" id="PS00678">
    <property type="entry name" value="WD_REPEATS_1"/>
    <property type="match status" value="2"/>
</dbReference>
<dbReference type="PROSITE" id="PS50082">
    <property type="entry name" value="WD_REPEATS_2"/>
    <property type="match status" value="2"/>
</dbReference>
<dbReference type="PROSITE" id="PS50294">
    <property type="entry name" value="WD_REPEATS_REGION"/>
    <property type="match status" value="1"/>
</dbReference>
<name>PAAF1_DICDI</name>
<protein>
    <recommendedName>
        <fullName>Probable proteasomal ATPase-associated factor 1</fullName>
    </recommendedName>
</protein>
<reference key="1">
    <citation type="journal article" date="2002" name="Nature">
        <title>Sequence and analysis of chromosome 2 of Dictyostelium discoideum.</title>
        <authorList>
            <person name="Gloeckner G."/>
            <person name="Eichinger L."/>
            <person name="Szafranski K."/>
            <person name="Pachebat J.A."/>
            <person name="Bankier A.T."/>
            <person name="Dear P.H."/>
            <person name="Lehmann R."/>
            <person name="Baumgart C."/>
            <person name="Parra G."/>
            <person name="Abril J.F."/>
            <person name="Guigo R."/>
            <person name="Kumpf K."/>
            <person name="Tunggal B."/>
            <person name="Cox E.C."/>
            <person name="Quail M.A."/>
            <person name="Platzer M."/>
            <person name="Rosenthal A."/>
            <person name="Noegel A.A."/>
        </authorList>
    </citation>
    <scope>NUCLEOTIDE SEQUENCE [LARGE SCALE GENOMIC DNA]</scope>
    <source>
        <strain>AX4</strain>
    </source>
</reference>
<reference key="2">
    <citation type="journal article" date="2005" name="Nature">
        <title>The genome of the social amoeba Dictyostelium discoideum.</title>
        <authorList>
            <person name="Eichinger L."/>
            <person name="Pachebat J.A."/>
            <person name="Gloeckner G."/>
            <person name="Rajandream M.A."/>
            <person name="Sucgang R."/>
            <person name="Berriman M."/>
            <person name="Song J."/>
            <person name="Olsen R."/>
            <person name="Szafranski K."/>
            <person name="Xu Q."/>
            <person name="Tunggal B."/>
            <person name="Kummerfeld S."/>
            <person name="Madera M."/>
            <person name="Konfortov B.A."/>
            <person name="Rivero F."/>
            <person name="Bankier A.T."/>
            <person name="Lehmann R."/>
            <person name="Hamlin N."/>
            <person name="Davies R."/>
            <person name="Gaudet P."/>
            <person name="Fey P."/>
            <person name="Pilcher K."/>
            <person name="Chen G."/>
            <person name="Saunders D."/>
            <person name="Sodergren E.J."/>
            <person name="Davis P."/>
            <person name="Kerhornou A."/>
            <person name="Nie X."/>
            <person name="Hall N."/>
            <person name="Anjard C."/>
            <person name="Hemphill L."/>
            <person name="Bason N."/>
            <person name="Farbrother P."/>
            <person name="Desany B."/>
            <person name="Just E."/>
            <person name="Morio T."/>
            <person name="Rost R."/>
            <person name="Churcher C.M."/>
            <person name="Cooper J."/>
            <person name="Haydock S."/>
            <person name="van Driessche N."/>
            <person name="Cronin A."/>
            <person name="Goodhead I."/>
            <person name="Muzny D.M."/>
            <person name="Mourier T."/>
            <person name="Pain A."/>
            <person name="Lu M."/>
            <person name="Harper D."/>
            <person name="Lindsay R."/>
            <person name="Hauser H."/>
            <person name="James K.D."/>
            <person name="Quiles M."/>
            <person name="Madan Babu M."/>
            <person name="Saito T."/>
            <person name="Buchrieser C."/>
            <person name="Wardroper A."/>
            <person name="Felder M."/>
            <person name="Thangavelu M."/>
            <person name="Johnson D."/>
            <person name="Knights A."/>
            <person name="Loulseged H."/>
            <person name="Mungall K.L."/>
            <person name="Oliver K."/>
            <person name="Price C."/>
            <person name="Quail M.A."/>
            <person name="Urushihara H."/>
            <person name="Hernandez J."/>
            <person name="Rabbinowitsch E."/>
            <person name="Steffen D."/>
            <person name="Sanders M."/>
            <person name="Ma J."/>
            <person name="Kohara Y."/>
            <person name="Sharp S."/>
            <person name="Simmonds M.N."/>
            <person name="Spiegler S."/>
            <person name="Tivey A."/>
            <person name="Sugano S."/>
            <person name="White B."/>
            <person name="Walker D."/>
            <person name="Woodward J.R."/>
            <person name="Winckler T."/>
            <person name="Tanaka Y."/>
            <person name="Shaulsky G."/>
            <person name="Schleicher M."/>
            <person name="Weinstock G.M."/>
            <person name="Rosenthal A."/>
            <person name="Cox E.C."/>
            <person name="Chisholm R.L."/>
            <person name="Gibbs R.A."/>
            <person name="Loomis W.F."/>
            <person name="Platzer M."/>
            <person name="Kay R.R."/>
            <person name="Williams J.G."/>
            <person name="Dear P.H."/>
            <person name="Noegel A.A."/>
            <person name="Barrell B.G."/>
            <person name="Kuspa A."/>
        </authorList>
    </citation>
    <scope>NUCLEOTIDE SEQUENCE [LARGE SCALE GENOMIC DNA]</scope>
    <source>
        <strain>AX4</strain>
    </source>
</reference>
<comment type="function">
    <text evidence="1">Inhibits proteasome 26S assembly and activity by impairing the association of the 19S regulatory complex with the 20S core.</text>
</comment>
<comment type="subunit">
    <text evidence="1">Interacts with proteasome 26S subunit ATPases.</text>
</comment>
<comment type="similarity">
    <text evidence="2">Belongs to the WD repeat PAAF1/RPN14 family.</text>
</comment>
<organism>
    <name type="scientific">Dictyostelium discoideum</name>
    <name type="common">Social amoeba</name>
    <dbReference type="NCBI Taxonomy" id="44689"/>
    <lineage>
        <taxon>Eukaryota</taxon>
        <taxon>Amoebozoa</taxon>
        <taxon>Evosea</taxon>
        <taxon>Eumycetozoa</taxon>
        <taxon>Dictyostelia</taxon>
        <taxon>Dictyosteliales</taxon>
        <taxon>Dictyosteliaceae</taxon>
        <taxon>Dictyostelium</taxon>
    </lineage>
</organism>
<gene>
    <name type="primary">paaf1</name>
    <name type="ORF">DDB_G0277471</name>
</gene>
<proteinExistence type="inferred from homology"/>